<feature type="chain" id="PRO_0000423708" description="ATP-dependent DNA helicase PIF1">
    <location>
        <begin position="1"/>
        <end position="906"/>
    </location>
</feature>
<feature type="DNA-binding region" evidence="1">
    <location>
        <begin position="840"/>
        <end position="859"/>
    </location>
</feature>
<feature type="region of interest" description="Disordered" evidence="2">
    <location>
        <begin position="77"/>
        <end position="146"/>
    </location>
</feature>
<feature type="region of interest" description="Disordered" evidence="2">
    <location>
        <begin position="229"/>
        <end position="297"/>
    </location>
</feature>
<feature type="compositionally biased region" description="Basic and acidic residues" evidence="2">
    <location>
        <begin position="78"/>
        <end position="87"/>
    </location>
</feature>
<feature type="compositionally biased region" description="Polar residues" evidence="2">
    <location>
        <begin position="88"/>
        <end position="119"/>
    </location>
</feature>
<feature type="compositionally biased region" description="Basic and acidic residues" evidence="2">
    <location>
        <begin position="120"/>
        <end position="132"/>
    </location>
</feature>
<feature type="compositionally biased region" description="Polar residues" evidence="2">
    <location>
        <begin position="234"/>
        <end position="261"/>
    </location>
</feature>
<feature type="compositionally biased region" description="Low complexity" evidence="2">
    <location>
        <begin position="273"/>
        <end position="291"/>
    </location>
</feature>
<feature type="binding site" evidence="1">
    <location>
        <begin position="390"/>
        <end position="397"/>
    </location>
    <ligand>
        <name>ATP</name>
        <dbReference type="ChEBI" id="CHEBI:30616"/>
    </ligand>
</feature>
<feature type="helix" evidence="3">
    <location>
        <begin position="371"/>
        <end position="381"/>
    </location>
</feature>
<feature type="strand" evidence="3">
    <location>
        <begin position="386"/>
        <end position="391"/>
    </location>
</feature>
<feature type="helix" evidence="3">
    <location>
        <begin position="396"/>
        <end position="410"/>
    </location>
</feature>
<feature type="strand" evidence="3">
    <location>
        <begin position="415"/>
        <end position="421"/>
    </location>
</feature>
<feature type="helix" evidence="3">
    <location>
        <begin position="422"/>
        <end position="426"/>
    </location>
</feature>
<feature type="turn" evidence="3">
    <location>
        <begin position="427"/>
        <end position="429"/>
    </location>
</feature>
<feature type="helix" evidence="3">
    <location>
        <begin position="433"/>
        <end position="437"/>
    </location>
</feature>
<feature type="helix" evidence="3">
    <location>
        <begin position="446"/>
        <end position="455"/>
    </location>
</feature>
<feature type="helix" evidence="3">
    <location>
        <begin position="457"/>
        <end position="465"/>
    </location>
</feature>
<feature type="strand" evidence="3">
    <location>
        <begin position="468"/>
        <end position="473"/>
    </location>
</feature>
<feature type="helix" evidence="3">
    <location>
        <begin position="474"/>
        <end position="476"/>
    </location>
</feature>
<feature type="helix" evidence="3">
    <location>
        <begin position="479"/>
        <end position="493"/>
    </location>
</feature>
<feature type="helix" evidence="3">
    <location>
        <begin position="498"/>
        <end position="501"/>
    </location>
</feature>
<feature type="strand" evidence="3">
    <location>
        <begin position="503"/>
        <end position="508"/>
    </location>
</feature>
<feature type="helix" evidence="3">
    <location>
        <begin position="535"/>
        <end position="537"/>
    </location>
</feature>
<feature type="helix" evidence="3">
    <location>
        <begin position="539"/>
        <end position="544"/>
    </location>
</feature>
<feature type="strand" evidence="3">
    <location>
        <begin position="547"/>
        <end position="551"/>
    </location>
</feature>
<feature type="turn" evidence="3">
    <location>
        <begin position="556"/>
        <end position="559"/>
    </location>
</feature>
<feature type="helix" evidence="3">
    <location>
        <begin position="561"/>
        <end position="569"/>
    </location>
</feature>
<feature type="turn" evidence="3">
    <location>
        <begin position="570"/>
        <end position="572"/>
    </location>
</feature>
<feature type="helix" evidence="3">
    <location>
        <begin position="577"/>
        <end position="584"/>
    </location>
</feature>
<feature type="helix" evidence="3">
    <location>
        <begin position="585"/>
        <end position="587"/>
    </location>
</feature>
<feature type="strand" evidence="3">
    <location>
        <begin position="599"/>
        <end position="604"/>
    </location>
</feature>
<feature type="helix" evidence="3">
    <location>
        <begin position="605"/>
        <end position="618"/>
    </location>
</feature>
<feature type="strand" evidence="3">
    <location>
        <begin position="624"/>
        <end position="627"/>
    </location>
</feature>
<feature type="strand" evidence="3">
    <location>
        <begin position="629"/>
        <end position="634"/>
    </location>
</feature>
<feature type="helix" evidence="3">
    <location>
        <begin position="638"/>
        <end position="644"/>
    </location>
</feature>
<feature type="strand" evidence="3">
    <location>
        <begin position="650"/>
        <end position="654"/>
    </location>
</feature>
<feature type="strand" evidence="3">
    <location>
        <begin position="659"/>
        <end position="662"/>
    </location>
</feature>
<feature type="strand" evidence="3">
    <location>
        <begin position="667"/>
        <end position="670"/>
    </location>
</feature>
<feature type="strand" evidence="3">
    <location>
        <begin position="675"/>
        <end position="681"/>
    </location>
</feature>
<feature type="strand" evidence="3">
    <location>
        <begin position="705"/>
        <end position="707"/>
    </location>
</feature>
<feature type="helix" evidence="3">
    <location>
        <begin position="754"/>
        <end position="759"/>
    </location>
</feature>
<feature type="strand" evidence="3">
    <location>
        <begin position="769"/>
        <end position="774"/>
    </location>
</feature>
<feature type="strand" evidence="3">
    <location>
        <begin position="781"/>
        <end position="785"/>
    </location>
</feature>
<feature type="strand" evidence="3">
    <location>
        <begin position="789"/>
        <end position="794"/>
    </location>
</feature>
<feature type="strand" evidence="3">
    <location>
        <begin position="800"/>
        <end position="806"/>
    </location>
</feature>
<feature type="strand" evidence="3">
    <location>
        <begin position="808"/>
        <end position="811"/>
    </location>
</feature>
<feature type="strand" evidence="3">
    <location>
        <begin position="813"/>
        <end position="816"/>
    </location>
</feature>
<feature type="helix" evidence="3">
    <location>
        <begin position="817"/>
        <end position="820"/>
    </location>
</feature>
<feature type="strand" evidence="3">
    <location>
        <begin position="825"/>
        <end position="831"/>
    </location>
</feature>
<feature type="helix" evidence="3">
    <location>
        <begin position="840"/>
        <end position="846"/>
    </location>
</feature>
<feature type="helix" evidence="3">
    <location>
        <begin position="851"/>
        <end position="853"/>
    </location>
</feature>
<feature type="strand" evidence="3">
    <location>
        <begin position="854"/>
        <end position="858"/>
    </location>
</feature>
<feature type="helix" evidence="3">
    <location>
        <begin position="861"/>
        <end position="863"/>
    </location>
</feature>
<feature type="helix" evidence="3">
    <location>
        <begin position="868"/>
        <end position="876"/>
    </location>
</feature>
<protein>
    <recommendedName>
        <fullName evidence="1">ATP-dependent DNA helicase PIF1</fullName>
        <ecNumber evidence="1">5.6.2.3</ecNumber>
    </recommendedName>
    <alternativeName>
        <fullName evidence="1">DNA 5'-3' helicase PIF1</fullName>
    </alternativeName>
    <alternativeName>
        <fullName evidence="1">DNA repair and recombination helicase PIF1</fullName>
    </alternativeName>
</protein>
<proteinExistence type="evidence at protein level"/>
<dbReference type="EC" id="5.6.2.3" evidence="1"/>
<dbReference type="EMBL" id="CP017630">
    <property type="protein sequence ID" value="AOW31431.1"/>
    <property type="molecule type" value="Genomic_DNA"/>
</dbReference>
<dbReference type="RefSeq" id="XP_712340.2">
    <property type="nucleotide sequence ID" value="XM_707247.2"/>
</dbReference>
<dbReference type="PDB" id="7OTJ">
    <property type="method" value="X-ray"/>
    <property type="resolution" value="2.58 A"/>
    <property type="chains" value="A/B=367-883"/>
</dbReference>
<dbReference type="PDBsum" id="7OTJ"/>
<dbReference type="SMR" id="Q59RQ0"/>
<dbReference type="FunCoup" id="Q59RQ0">
    <property type="interactions" value="857"/>
</dbReference>
<dbReference type="STRING" id="237561.Q59RQ0"/>
<dbReference type="EnsemblFungi" id="CR_07360W_A-T">
    <property type="protein sequence ID" value="CR_07360W_A-T-p1"/>
    <property type="gene ID" value="CR_07360W_A"/>
</dbReference>
<dbReference type="GeneID" id="3646054"/>
<dbReference type="KEGG" id="cal:CAALFM_CR07360WA"/>
<dbReference type="CGD" id="CAL0000185430">
    <property type="gene designation" value="PIF1"/>
</dbReference>
<dbReference type="VEuPathDB" id="FungiDB:CR_07360W_A"/>
<dbReference type="eggNOG" id="KOG0987">
    <property type="taxonomic scope" value="Eukaryota"/>
</dbReference>
<dbReference type="HOGENOM" id="CLU_001613_0_2_1"/>
<dbReference type="InParanoid" id="Q59RQ0"/>
<dbReference type="OrthoDB" id="432234at2759"/>
<dbReference type="PRO" id="PR:Q59RQ0"/>
<dbReference type="Proteomes" id="UP000000559">
    <property type="component" value="Chromosome R"/>
</dbReference>
<dbReference type="GO" id="GO:0031966">
    <property type="term" value="C:mitochondrial membrane"/>
    <property type="evidence" value="ECO:0007669"/>
    <property type="project" value="EnsemblFungi"/>
</dbReference>
<dbReference type="GO" id="GO:0005739">
    <property type="term" value="C:mitochondrion"/>
    <property type="evidence" value="ECO:0000318"/>
    <property type="project" value="GO_Central"/>
</dbReference>
<dbReference type="GO" id="GO:0043596">
    <property type="term" value="C:nuclear replication fork"/>
    <property type="evidence" value="ECO:0000318"/>
    <property type="project" value="GO_Central"/>
</dbReference>
<dbReference type="GO" id="GO:0035861">
    <property type="term" value="C:site of double-strand break"/>
    <property type="evidence" value="ECO:0007669"/>
    <property type="project" value="EnsemblFungi"/>
</dbReference>
<dbReference type="GO" id="GO:0008408">
    <property type="term" value="F:3'-5' exonuclease activity"/>
    <property type="evidence" value="ECO:0000314"/>
    <property type="project" value="CGD"/>
</dbReference>
<dbReference type="GO" id="GO:0043139">
    <property type="term" value="F:5'-3' DNA helicase activity"/>
    <property type="evidence" value="ECO:0000314"/>
    <property type="project" value="CGD"/>
</dbReference>
<dbReference type="GO" id="GO:0005524">
    <property type="term" value="F:ATP binding"/>
    <property type="evidence" value="ECO:0007669"/>
    <property type="project" value="UniProtKB-UniRule"/>
</dbReference>
<dbReference type="GO" id="GO:0016887">
    <property type="term" value="F:ATP hydrolysis activity"/>
    <property type="evidence" value="ECO:0000314"/>
    <property type="project" value="CGD"/>
</dbReference>
<dbReference type="GO" id="GO:0019237">
    <property type="term" value="F:centromeric DNA binding"/>
    <property type="evidence" value="ECO:0007669"/>
    <property type="project" value="EnsemblFungi"/>
</dbReference>
<dbReference type="GO" id="GO:0003678">
    <property type="term" value="F:DNA helicase activity"/>
    <property type="evidence" value="ECO:0000314"/>
    <property type="project" value="CGD"/>
</dbReference>
<dbReference type="GO" id="GO:0051880">
    <property type="term" value="F:G-quadruplex DNA binding"/>
    <property type="evidence" value="ECO:0007669"/>
    <property type="project" value="EnsemblFungi"/>
</dbReference>
<dbReference type="GO" id="GO:0003697">
    <property type="term" value="F:single-stranded DNA binding"/>
    <property type="evidence" value="ECO:0000314"/>
    <property type="project" value="CGD"/>
</dbReference>
<dbReference type="GO" id="GO:0010521">
    <property type="term" value="F:telomerase inhibitor activity"/>
    <property type="evidence" value="ECO:0007669"/>
    <property type="project" value="EnsemblFungi"/>
</dbReference>
<dbReference type="GO" id="GO:0042162">
    <property type="term" value="F:telomeric DNA binding"/>
    <property type="evidence" value="ECO:0007669"/>
    <property type="project" value="EnsemblFungi"/>
</dbReference>
<dbReference type="GO" id="GO:0000727">
    <property type="term" value="P:double-strand break repair via break-induced replication"/>
    <property type="evidence" value="ECO:0007669"/>
    <property type="project" value="EnsemblFungi"/>
</dbReference>
<dbReference type="GO" id="GO:0000002">
    <property type="term" value="P:mitochondrial genome maintenance"/>
    <property type="evidence" value="ECO:0000318"/>
    <property type="project" value="GO_Central"/>
</dbReference>
<dbReference type="GO" id="GO:0032211">
    <property type="term" value="P:negative regulation of telomere maintenance via telomerase"/>
    <property type="evidence" value="ECO:0007669"/>
    <property type="project" value="EnsemblFungi"/>
</dbReference>
<dbReference type="GO" id="GO:0071932">
    <property type="term" value="P:replication fork reversal"/>
    <property type="evidence" value="ECO:0000318"/>
    <property type="project" value="GO_Central"/>
</dbReference>
<dbReference type="GO" id="GO:0000723">
    <property type="term" value="P:telomere maintenance"/>
    <property type="evidence" value="ECO:0000318"/>
    <property type="project" value="GO_Central"/>
</dbReference>
<dbReference type="GO" id="GO:0000722">
    <property type="term" value="P:telomere maintenance via recombination"/>
    <property type="evidence" value="ECO:0007669"/>
    <property type="project" value="EnsemblFungi"/>
</dbReference>
<dbReference type="GO" id="GO:0019985">
    <property type="term" value="P:translesion synthesis"/>
    <property type="evidence" value="ECO:0007669"/>
    <property type="project" value="EnsemblFungi"/>
</dbReference>
<dbReference type="CDD" id="cd18037">
    <property type="entry name" value="DEXSc_Pif1_like"/>
    <property type="match status" value="1"/>
</dbReference>
<dbReference type="CDD" id="cd18809">
    <property type="entry name" value="SF1_C_RecD"/>
    <property type="match status" value="1"/>
</dbReference>
<dbReference type="FunFam" id="3.40.50.300:FF:001226">
    <property type="entry name" value="ATP-dependent DNA helicase PIF1"/>
    <property type="match status" value="1"/>
</dbReference>
<dbReference type="Gene3D" id="3.40.50.300">
    <property type="entry name" value="P-loop containing nucleotide triphosphate hydrolases"/>
    <property type="match status" value="1"/>
</dbReference>
<dbReference type="HAMAP" id="MF_03176">
    <property type="entry name" value="PIF1"/>
    <property type="match status" value="1"/>
</dbReference>
<dbReference type="InterPro" id="IPR003593">
    <property type="entry name" value="AAA+_ATPase"/>
</dbReference>
<dbReference type="InterPro" id="IPR010285">
    <property type="entry name" value="DNA_helicase_pif1-like_DEAD"/>
</dbReference>
<dbReference type="InterPro" id="IPR027417">
    <property type="entry name" value="P-loop_NTPase"/>
</dbReference>
<dbReference type="InterPro" id="IPR049163">
    <property type="entry name" value="Pif1-like_2B_dom"/>
</dbReference>
<dbReference type="InterPro" id="IPR051055">
    <property type="entry name" value="PIF1_helicase"/>
</dbReference>
<dbReference type="InterPro" id="IPR048293">
    <property type="entry name" value="PIF1_RRM3_pfh1"/>
</dbReference>
<dbReference type="PANTHER" id="PTHR47642">
    <property type="entry name" value="ATP-DEPENDENT DNA HELICASE"/>
    <property type="match status" value="1"/>
</dbReference>
<dbReference type="PANTHER" id="PTHR47642:SF5">
    <property type="entry name" value="ATP-DEPENDENT DNA HELICASE"/>
    <property type="match status" value="1"/>
</dbReference>
<dbReference type="Pfam" id="PF05970">
    <property type="entry name" value="PIF1"/>
    <property type="match status" value="1"/>
</dbReference>
<dbReference type="Pfam" id="PF21530">
    <property type="entry name" value="Pif1_2B_dom"/>
    <property type="match status" value="1"/>
</dbReference>
<dbReference type="SMART" id="SM00382">
    <property type="entry name" value="AAA"/>
    <property type="match status" value="1"/>
</dbReference>
<dbReference type="SUPFAM" id="SSF52540">
    <property type="entry name" value="P-loop containing nucleoside triphosphate hydrolases"/>
    <property type="match status" value="2"/>
</dbReference>
<evidence type="ECO:0000255" key="1">
    <source>
        <dbReference type="HAMAP-Rule" id="MF_03176"/>
    </source>
</evidence>
<evidence type="ECO:0000256" key="2">
    <source>
        <dbReference type="SAM" id="MobiDB-lite"/>
    </source>
</evidence>
<evidence type="ECO:0007829" key="3">
    <source>
        <dbReference type="PDB" id="7OTJ"/>
    </source>
</evidence>
<sequence>MLNANKSIIRLATYSIRNRIHHLRTLHSLNYINSRINIQDTNHIRPTCPCGSKQFMLESELDSALIEFLDNDDPFSDSEIKESDDLSKGQSHVYNGSPVTKNSILQIEKQQIQKSPRPTETNKRMQIRKDPDQNDNVDDDSLSSTFEFSDMDDDFMEALKAAEEITGNNTNCIKRTASTPLKKPIAKSMKNSSTPSKSAGKKYCKYIKTSSPSPSHYLIRESGSGVDILEGSPNKVQADNASPFRITSSFSSPSQIQNQGVGANPGPKSKAEQNVSSASQSSSPPMTVSQVRNPFKVPTQFRRNYSTRPITNQGSDTKKGNSHHTILLATQKPGVPFSNPSDRSYHKLEKTEGINEAQSEAKNVKPIILSNEQEYVLKQVLSGVSLFYTGSAGTGKSVLLRSIIKSLRDKYPKGVAVTASTGLAACNIGGITLHSFAGFGLGQGKVENLIKKIKRNKKAFTRWRETRVLIIDEISMVDGHLLNKLNEIAKNLRRNNRPFGGIQLVACGDFYQLPPVVKKTAHDGTELDDVEVFFAFESSAWKETIQRTITLKEIFRQKGDQRFINMLNNLRDGNVPDDTARDFCRLSRPLKCPEGIVPSELYATRYEVDMANSRKLNTIQGDVVVYNSVDTGILPEPQKTQVLTNFLAPQVLNLKVGAQVMCIKNFDDQLVNGTLGKVIDFVDRDTYMKSESKENPSTETSDEVSGLNDYIFNDFQKPKKVVKEDAPIAEQVLFTGQLSQKVEEESESSKRKSKLKDDLMKDYKNKKYPLVKFLLPDGITFRTVVVEPEQWTTEDEDGTVLVSRIQFPLILAWSLSIHKSQGQTLSKVVVDMKKIFENGQAYVALSRAVSRAGLQVLNFNRSKVASHRKVIEFYKNLSSHEKESRSGQQRLNFMQTSVKSVARAQI</sequence>
<accession>Q59RQ0</accession>
<accession>A0A1D8PTG7</accession>
<accession>Q59RT8</accession>
<gene>
    <name evidence="1" type="primary">PIF1</name>
    <name type="ordered locus">CAALFM_CR07360WA</name>
    <name type="ORF">CaO19.13552</name>
    <name type="ORF">CaO19.6133</name>
</gene>
<keyword id="KW-0002">3D-structure</keyword>
<keyword id="KW-0067">ATP-binding</keyword>
<keyword id="KW-0227">DNA damage</keyword>
<keyword id="KW-0233">DNA recombination</keyword>
<keyword id="KW-0234">DNA repair</keyword>
<keyword id="KW-0238">DNA-binding</keyword>
<keyword id="KW-0347">Helicase</keyword>
<keyword id="KW-0378">Hydrolase</keyword>
<keyword id="KW-0413">Isomerase</keyword>
<keyword id="KW-0496">Mitochondrion</keyword>
<keyword id="KW-0547">Nucleotide-binding</keyword>
<keyword id="KW-0539">Nucleus</keyword>
<keyword id="KW-1185">Reference proteome</keyword>
<name>PIF1_CANAL</name>
<comment type="function">
    <text evidence="1">DNA-dependent ATPase and 5'-3' DNA helicase required for the maintenance of both mitochondrial and nuclear genome stability. Efficiently unwinds G-quadruplex (G4) DNA structures and forked RNA-DNA hybrids. Resolves G4 structures, preventing replication pausing and double-strand breaks (DSBs) at G4 motifs. Involved in the maintenance of telomeric DNA. Inhibits telomere elongation, de novo telomere formation and telomere addition to DSBs via catalytic inhibition of telomerase. Reduces the processivity of telomerase by displacing active telomerase from DNA ends. Releases telomerase by unwinding the short telomerase RNA/telomeric DNA hybrid that is the intermediate in the telomerase reaction. Involved in the maintenance of ribosomal (rDNA). Required for efficient fork arrest at the replication fork barrier within rDNA. Involved in the maintenance of mitochondrial (mtDNA). Required to maintain mtDNA under conditions that introduce dsDNA breaks in mtDNA, either preventing or repairing dsDNA breaks. May inhibit replication progression to allow time for repair. May have a general role in chromosomal replication by affecting Okazaki fragment maturation. May have a role in conjunction with DNA2 helicase/nuclease in 5'-flap extension during Okazaki fragment processing.</text>
</comment>
<comment type="catalytic activity">
    <reaction evidence="1">
        <text>Couples ATP hydrolysis with the unwinding of duplex DNA at the replication fork by translocating in the 5'-3' direction. This creates two antiparallel DNA single strands (ssDNA). The leading ssDNA polymer is the template for DNA polymerase III holoenzyme which synthesizes a continuous strand.</text>
        <dbReference type="EC" id="5.6.2.3"/>
    </reaction>
</comment>
<comment type="catalytic activity">
    <reaction evidence="1">
        <text>ATP + H2O = ADP + phosphate + H(+)</text>
        <dbReference type="Rhea" id="RHEA:13065"/>
        <dbReference type="ChEBI" id="CHEBI:15377"/>
        <dbReference type="ChEBI" id="CHEBI:15378"/>
        <dbReference type="ChEBI" id="CHEBI:30616"/>
        <dbReference type="ChEBI" id="CHEBI:43474"/>
        <dbReference type="ChEBI" id="CHEBI:456216"/>
        <dbReference type="EC" id="5.6.2.3"/>
    </reaction>
</comment>
<comment type="cofactor">
    <cofactor evidence="1">
        <name>Mg(2+)</name>
        <dbReference type="ChEBI" id="CHEBI:18420"/>
    </cofactor>
</comment>
<comment type="subunit">
    <text evidence="1">Monomer. Interacts with telomerase.</text>
</comment>
<comment type="subcellular location">
    <subcellularLocation>
        <location evidence="1">Nucleus</location>
    </subcellularLocation>
    <subcellularLocation>
        <location evidence="1">Mitochondrion</location>
    </subcellularLocation>
</comment>
<comment type="similarity">
    <text evidence="1">Belongs to the helicase family. PIF1 subfamily.</text>
</comment>
<organism>
    <name type="scientific">Candida albicans (strain SC5314 / ATCC MYA-2876)</name>
    <name type="common">Yeast</name>
    <dbReference type="NCBI Taxonomy" id="237561"/>
    <lineage>
        <taxon>Eukaryota</taxon>
        <taxon>Fungi</taxon>
        <taxon>Dikarya</taxon>
        <taxon>Ascomycota</taxon>
        <taxon>Saccharomycotina</taxon>
        <taxon>Pichiomycetes</taxon>
        <taxon>Debaryomycetaceae</taxon>
        <taxon>Candida/Lodderomyces clade</taxon>
        <taxon>Candida</taxon>
    </lineage>
</organism>
<reference key="1">
    <citation type="journal article" date="2004" name="Proc. Natl. Acad. Sci. U.S.A.">
        <title>The diploid genome sequence of Candida albicans.</title>
        <authorList>
            <person name="Jones T."/>
            <person name="Federspiel N.A."/>
            <person name="Chibana H."/>
            <person name="Dungan J."/>
            <person name="Kalman S."/>
            <person name="Magee B.B."/>
            <person name="Newport G."/>
            <person name="Thorstenson Y.R."/>
            <person name="Agabian N."/>
            <person name="Magee P.T."/>
            <person name="Davis R.W."/>
            <person name="Scherer S."/>
        </authorList>
    </citation>
    <scope>NUCLEOTIDE SEQUENCE [LARGE SCALE GENOMIC DNA]</scope>
    <source>
        <strain>SC5314 / ATCC MYA-2876</strain>
    </source>
</reference>
<reference key="2">
    <citation type="journal article" date="2007" name="Genome Biol.">
        <title>Assembly of the Candida albicans genome into sixteen supercontigs aligned on the eight chromosomes.</title>
        <authorList>
            <person name="van het Hoog M."/>
            <person name="Rast T.J."/>
            <person name="Martchenko M."/>
            <person name="Grindle S."/>
            <person name="Dignard D."/>
            <person name="Hogues H."/>
            <person name="Cuomo C."/>
            <person name="Berriman M."/>
            <person name="Scherer S."/>
            <person name="Magee B.B."/>
            <person name="Whiteway M."/>
            <person name="Chibana H."/>
            <person name="Nantel A."/>
            <person name="Magee P.T."/>
        </authorList>
    </citation>
    <scope>GENOME REANNOTATION</scope>
    <source>
        <strain>SC5314 / ATCC MYA-2876</strain>
    </source>
</reference>
<reference key="3">
    <citation type="journal article" date="2013" name="Genome Biol.">
        <title>Assembly of a phased diploid Candida albicans genome facilitates allele-specific measurements and provides a simple model for repeat and indel structure.</title>
        <authorList>
            <person name="Muzzey D."/>
            <person name="Schwartz K."/>
            <person name="Weissman J.S."/>
            <person name="Sherlock G."/>
        </authorList>
    </citation>
    <scope>NUCLEOTIDE SEQUENCE [LARGE SCALE GENOMIC DNA]</scope>
    <scope>GENOME REANNOTATION</scope>
    <source>
        <strain>SC5314 / ATCC MYA-2876</strain>
    </source>
</reference>